<evidence type="ECO:0000255" key="1"/>
<evidence type="ECO:0000305" key="2"/>
<reference key="1">
    <citation type="journal article" date="2002" name="Proc. Natl. Acad. Sci. U.S.A.">
        <title>The genome sequence of the facultative intracellular pathogen Brucella melitensis.</title>
        <authorList>
            <person name="DelVecchio V.G."/>
            <person name="Kapatral V."/>
            <person name="Redkar R.J."/>
            <person name="Patra G."/>
            <person name="Mujer C."/>
            <person name="Los T."/>
            <person name="Ivanova N."/>
            <person name="Anderson I."/>
            <person name="Bhattacharyya A."/>
            <person name="Lykidis A."/>
            <person name="Reznik G."/>
            <person name="Jablonski L."/>
            <person name="Larsen N."/>
            <person name="D'Souza M."/>
            <person name="Bernal A."/>
            <person name="Mazur M."/>
            <person name="Goltsman E."/>
            <person name="Selkov E."/>
            <person name="Elzer P.H."/>
            <person name="Hagius S."/>
            <person name="O'Callaghan D."/>
            <person name="Letesson J.-J."/>
            <person name="Haselkorn R."/>
            <person name="Kyrpides N.C."/>
            <person name="Overbeek R."/>
        </authorList>
    </citation>
    <scope>NUCLEOTIDE SEQUENCE [LARGE SCALE GENOMIC DNA]</scope>
    <source>
        <strain>ATCC 23456 / CCUG 17765 / NCTC 10094 / 16M</strain>
    </source>
</reference>
<comment type="similarity">
    <text evidence="2">Belongs to the TrbG/VirB9 family.</text>
</comment>
<comment type="sequence caution" evidence="2">
    <conflict type="frameshift">
        <sequence resource="EMBL-CDS" id="AAL53274"/>
    </conflict>
</comment>
<sequence>MKRIFLLACILITLASPSWATKIPSGSKYDSRIQYVDYNSGDVVLVRALPGVGARIVFAPGENIEDVASGFTQGWEFKASHNILYLKARSMTLSHSNQSIDMAPEPGKWDTNLMVTTDQRMYDFDLRLMPGRNNQRVAYRVQFRYPAAAAAAAVAAAQKRVVQARMNARPSPVNWNYTMQVGTNSASIAPTLAYDDGRFTYLRFPNNRDFPAAFLVAEDKSESIVNSHIDPSAPDILVLHRVAKQMVLRLGNKVIGIYNESFNPDGVPARDGTTVPRVKRVIKSPGENLQ</sequence>
<organism>
    <name type="scientific">Brucella melitensis biotype 1 (strain ATCC 23456 / CCUG 17765 / NCTC 10094 / 16M)</name>
    <dbReference type="NCBI Taxonomy" id="224914"/>
    <lineage>
        <taxon>Bacteria</taxon>
        <taxon>Pseudomonadati</taxon>
        <taxon>Pseudomonadota</taxon>
        <taxon>Alphaproteobacteria</taxon>
        <taxon>Hyphomicrobiales</taxon>
        <taxon>Brucellaceae</taxon>
        <taxon>Brucella/Ochrobactrum group</taxon>
        <taxon>Brucella</taxon>
    </lineage>
</organism>
<dbReference type="EMBL" id="AE008918">
    <property type="protein sequence ID" value="AAL53274.1"/>
    <property type="status" value="ALT_FRAME"/>
    <property type="molecule type" value="Genomic_DNA"/>
</dbReference>
<dbReference type="PIR" id="AG3513">
    <property type="entry name" value="AG3513"/>
</dbReference>
<dbReference type="SMR" id="Q8YDZ1"/>
<dbReference type="KEGG" id="bme:BMEII0033"/>
<dbReference type="eggNOG" id="COG3504">
    <property type="taxonomic scope" value="Bacteria"/>
</dbReference>
<dbReference type="PRO" id="PR:Q8YDZ1"/>
<dbReference type="Proteomes" id="UP000000419">
    <property type="component" value="Chromosome II"/>
</dbReference>
<dbReference type="CDD" id="cd06911">
    <property type="entry name" value="VirB9_CagX_TrbG"/>
    <property type="match status" value="1"/>
</dbReference>
<dbReference type="Gene3D" id="2.60.40.2500">
    <property type="match status" value="1"/>
</dbReference>
<dbReference type="InterPro" id="IPR010258">
    <property type="entry name" value="Conjugal_tfr_TrbG/VirB9/CagX"/>
</dbReference>
<dbReference type="InterPro" id="IPR014148">
    <property type="entry name" value="VirB9"/>
</dbReference>
<dbReference type="InterPro" id="IPR033645">
    <property type="entry name" value="VirB9/CagX/TrbG_C"/>
</dbReference>
<dbReference type="InterPro" id="IPR038161">
    <property type="entry name" value="VirB9/CagX/TrbG_C_sf"/>
</dbReference>
<dbReference type="NCBIfam" id="TIGR02781">
    <property type="entry name" value="VirB9"/>
    <property type="match status" value="1"/>
</dbReference>
<dbReference type="Pfam" id="PF03524">
    <property type="entry name" value="CagX"/>
    <property type="match status" value="1"/>
</dbReference>
<proteinExistence type="inferred from homology"/>
<protein>
    <recommendedName>
        <fullName>Type IV secretion system protein virB9</fullName>
    </recommendedName>
</protein>
<feature type="signal peptide" evidence="1">
    <location>
        <begin position="1"/>
        <end position="20"/>
    </location>
</feature>
<feature type="chain" id="PRO_0000291434" description="Type IV secretion system protein virB9">
    <location>
        <begin position="21"/>
        <end position="290"/>
    </location>
</feature>
<accession>Q8YDZ1</accession>
<gene>
    <name type="primary">virB9</name>
    <name type="ordered locus">BMEII0033</name>
</gene>
<keyword id="KW-0732">Signal</keyword>
<keyword id="KW-0843">Virulence</keyword>
<name>VIRB9_BRUME</name>